<protein>
    <recommendedName>
        <fullName>Ubiquitin-protein ligase E3A</fullName>
        <ecNumber evidence="5 7">2.3.2.26</ecNumber>
    </recommendedName>
    <alternativeName>
        <fullName>HECT-type ubiquitin transferase E3A</fullName>
    </alternativeName>
    <alternativeName>
        <fullName>Oncogenic protein-associated protein E6-AP</fullName>
    </alternativeName>
</protein>
<organism>
    <name type="scientific">Mus musculus</name>
    <name type="common">Mouse</name>
    <dbReference type="NCBI Taxonomy" id="10090"/>
    <lineage>
        <taxon>Eukaryota</taxon>
        <taxon>Metazoa</taxon>
        <taxon>Chordata</taxon>
        <taxon>Craniata</taxon>
        <taxon>Vertebrata</taxon>
        <taxon>Euteleostomi</taxon>
        <taxon>Mammalia</taxon>
        <taxon>Eutheria</taxon>
        <taxon>Euarchontoglires</taxon>
        <taxon>Glires</taxon>
        <taxon>Rodentia</taxon>
        <taxon>Myomorpha</taxon>
        <taxon>Muroidea</taxon>
        <taxon>Muridae</taxon>
        <taxon>Murinae</taxon>
        <taxon>Mus</taxon>
        <taxon>Mus</taxon>
    </lineage>
</organism>
<dbReference type="EC" id="2.3.2.26" evidence="5 7"/>
<dbReference type="EMBL" id="U96636">
    <property type="protein sequence ID" value="AAB63361.1"/>
    <property type="molecule type" value="mRNA"/>
</dbReference>
<dbReference type="EMBL" id="U82122">
    <property type="protein sequence ID" value="AAB47756.1"/>
    <property type="status" value="ALT_FRAME"/>
    <property type="molecule type" value="mRNA"/>
</dbReference>
<dbReference type="EMBL" id="AK029133">
    <property type="protein sequence ID" value="BAC26314.1"/>
    <property type="molecule type" value="mRNA"/>
</dbReference>
<dbReference type="EMBL" id="AC167971">
    <property type="status" value="NOT_ANNOTATED_CDS"/>
    <property type="molecule type" value="Genomic_DNA"/>
</dbReference>
<dbReference type="EMBL" id="BC131658">
    <property type="protein sequence ID" value="AAI31659.1"/>
    <property type="molecule type" value="mRNA"/>
</dbReference>
<dbReference type="EMBL" id="BC131659">
    <property type="protein sequence ID" value="AAI31660.1"/>
    <property type="molecule type" value="mRNA"/>
</dbReference>
<dbReference type="CCDS" id="CCDS39973.1">
    <molecule id="O08759-1"/>
</dbReference>
<dbReference type="CCDS" id="CCDS80733.1">
    <molecule id="O08759-2"/>
</dbReference>
<dbReference type="RefSeq" id="NP_001029134.1">
    <molecule id="O08759-2"/>
    <property type="nucleotide sequence ID" value="NM_001033962.2"/>
</dbReference>
<dbReference type="RefSeq" id="NP_001380595.1">
    <molecule id="O08759-1"/>
    <property type="nucleotide sequence ID" value="NM_001393666.1"/>
</dbReference>
<dbReference type="RefSeq" id="NP_001380597.1">
    <molecule id="O08759-2"/>
    <property type="nucleotide sequence ID" value="NM_001393668.1"/>
</dbReference>
<dbReference type="RefSeq" id="NP_001380902.1">
    <molecule id="O08759-1"/>
    <property type="nucleotide sequence ID" value="NM_001393973.1"/>
</dbReference>
<dbReference type="RefSeq" id="NP_035798.2">
    <molecule id="O08759-1"/>
    <property type="nucleotide sequence ID" value="NM_011668.3"/>
</dbReference>
<dbReference type="RefSeq" id="NP_766598.1">
    <molecule id="O08759-3"/>
    <property type="nucleotide sequence ID" value="NM_173010.4"/>
</dbReference>
<dbReference type="RefSeq" id="XP_006540862.1">
    <property type="nucleotide sequence ID" value="XM_006540799.3"/>
</dbReference>
<dbReference type="RefSeq" id="XP_011249149.1">
    <property type="nucleotide sequence ID" value="XM_011250847.2"/>
</dbReference>
<dbReference type="RefSeq" id="XP_017177614.1">
    <property type="nucleotide sequence ID" value="XM_017322125.1"/>
</dbReference>
<dbReference type="RefSeq" id="XP_030098232.1">
    <molecule id="O08759-2"/>
    <property type="nucleotide sequence ID" value="XM_030242372.2"/>
</dbReference>
<dbReference type="SMR" id="O08759"/>
<dbReference type="CORUM" id="O08759"/>
<dbReference type="FunCoup" id="O08759">
    <property type="interactions" value="4350"/>
</dbReference>
<dbReference type="IntAct" id="O08759">
    <property type="interactions" value="2"/>
</dbReference>
<dbReference type="MINT" id="O08759"/>
<dbReference type="STRING" id="10090.ENSMUSP00000143859"/>
<dbReference type="iPTMnet" id="O08759"/>
<dbReference type="PhosphoSitePlus" id="O08759"/>
<dbReference type="SwissPalm" id="O08759"/>
<dbReference type="jPOST" id="O08759"/>
<dbReference type="PaxDb" id="10090-ENSMUSP00000103161"/>
<dbReference type="PeptideAtlas" id="O08759"/>
<dbReference type="ProteomicsDB" id="298183">
    <molecule id="O08759-1"/>
</dbReference>
<dbReference type="ProteomicsDB" id="298184">
    <molecule id="O08759-2"/>
</dbReference>
<dbReference type="ProteomicsDB" id="298185">
    <molecule id="O08759-3"/>
</dbReference>
<dbReference type="Pumba" id="O08759"/>
<dbReference type="Antibodypedia" id="9118">
    <property type="antibodies" value="428 antibodies from 37 providers"/>
</dbReference>
<dbReference type="DNASU" id="22215"/>
<dbReference type="Ensembl" id="ENSMUST00000107537.5">
    <molecule id="O08759-2"/>
    <property type="protein sequence ID" value="ENSMUSP00000103161.3"/>
    <property type="gene ID" value="ENSMUSG00000025326.13"/>
</dbReference>
<dbReference type="Ensembl" id="ENSMUST00000200758.4">
    <molecule id="O08759-1"/>
    <property type="protein sequence ID" value="ENSMUSP00000143859.2"/>
    <property type="gene ID" value="ENSMUSG00000025326.13"/>
</dbReference>
<dbReference type="Ensembl" id="ENSMUST00000202945.4">
    <molecule id="O08759-3"/>
    <property type="protein sequence ID" value="ENSMUSP00000143962.2"/>
    <property type="gene ID" value="ENSMUSG00000025326.13"/>
</dbReference>
<dbReference type="GeneID" id="22215"/>
<dbReference type="KEGG" id="mmu:22215"/>
<dbReference type="UCSC" id="uc009heg.1">
    <property type="organism name" value="mouse"/>
</dbReference>
<dbReference type="UCSC" id="uc009hei.1">
    <property type="organism name" value="mouse"/>
</dbReference>
<dbReference type="AGR" id="MGI:105098"/>
<dbReference type="CTD" id="7337"/>
<dbReference type="MGI" id="MGI:105098">
    <property type="gene designation" value="Ube3a"/>
</dbReference>
<dbReference type="VEuPathDB" id="HostDB:ENSMUSG00000025326"/>
<dbReference type="eggNOG" id="KOG0941">
    <property type="taxonomic scope" value="Eukaryota"/>
</dbReference>
<dbReference type="GeneTree" id="ENSGT00940000155050"/>
<dbReference type="HOGENOM" id="CLU_002173_5_0_1"/>
<dbReference type="InParanoid" id="O08759"/>
<dbReference type="OMA" id="AHCTNAN"/>
<dbReference type="OrthoDB" id="5981550at2759"/>
<dbReference type="PhylomeDB" id="O08759"/>
<dbReference type="TreeFam" id="TF315189"/>
<dbReference type="Reactome" id="R-MMU-983168">
    <property type="pathway name" value="Antigen processing: Ubiquitination &amp; Proteasome degradation"/>
</dbReference>
<dbReference type="UniPathway" id="UPA00143"/>
<dbReference type="BioGRID-ORCS" id="22215">
    <property type="hits" value="4 hits in 77 CRISPR screens"/>
</dbReference>
<dbReference type="ChiTaRS" id="Ube3a">
    <property type="organism name" value="mouse"/>
</dbReference>
<dbReference type="PRO" id="PR:O08759"/>
<dbReference type="Proteomes" id="UP000000589">
    <property type="component" value="Chromosome 7"/>
</dbReference>
<dbReference type="RNAct" id="O08759">
    <property type="molecule type" value="protein"/>
</dbReference>
<dbReference type="Bgee" id="ENSMUSG00000025326">
    <property type="expression patterns" value="Expressed in rostral migratory stream and 255 other cell types or tissues"/>
</dbReference>
<dbReference type="ExpressionAtlas" id="O08759">
    <property type="expression patterns" value="baseline and differential"/>
</dbReference>
<dbReference type="GO" id="GO:0005829">
    <property type="term" value="C:cytosol"/>
    <property type="evidence" value="ECO:0000314"/>
    <property type="project" value="MGI"/>
</dbReference>
<dbReference type="GO" id="GO:0098978">
    <property type="term" value="C:glutamatergic synapse"/>
    <property type="evidence" value="ECO:0000314"/>
    <property type="project" value="SynGO"/>
</dbReference>
<dbReference type="GO" id="GO:0005634">
    <property type="term" value="C:nucleus"/>
    <property type="evidence" value="ECO:0000314"/>
    <property type="project" value="MGI"/>
</dbReference>
<dbReference type="GO" id="GO:0099524">
    <property type="term" value="C:postsynaptic cytosol"/>
    <property type="evidence" value="ECO:0000314"/>
    <property type="project" value="SynGO"/>
</dbReference>
<dbReference type="GO" id="GO:0000502">
    <property type="term" value="C:proteasome complex"/>
    <property type="evidence" value="ECO:0007669"/>
    <property type="project" value="UniProtKB-KW"/>
</dbReference>
<dbReference type="GO" id="GO:0008021">
    <property type="term" value="C:synaptic vesicle"/>
    <property type="evidence" value="ECO:0000314"/>
    <property type="project" value="SynGO"/>
</dbReference>
<dbReference type="GO" id="GO:0003713">
    <property type="term" value="F:transcription coactivator activity"/>
    <property type="evidence" value="ECO:0000314"/>
    <property type="project" value="MGI"/>
</dbReference>
<dbReference type="GO" id="GO:0061630">
    <property type="term" value="F:ubiquitin protein ligase activity"/>
    <property type="evidence" value="ECO:0000314"/>
    <property type="project" value="UniProtKB"/>
</dbReference>
<dbReference type="GO" id="GO:0004842">
    <property type="term" value="F:ubiquitin-protein transferase activity"/>
    <property type="evidence" value="ECO:0000250"/>
    <property type="project" value="UniProtKB"/>
</dbReference>
<dbReference type="GO" id="GO:0008270">
    <property type="term" value="F:zinc ion binding"/>
    <property type="evidence" value="ECO:0007669"/>
    <property type="project" value="UniProtKB-KW"/>
</dbReference>
<dbReference type="GO" id="GO:0030521">
    <property type="term" value="P:androgen receptor signaling pathway"/>
    <property type="evidence" value="ECO:0000353"/>
    <property type="project" value="MGI"/>
</dbReference>
<dbReference type="GO" id="GO:0050804">
    <property type="term" value="P:modulation of chemical synaptic transmission"/>
    <property type="evidence" value="ECO:0000314"/>
    <property type="project" value="SynGO"/>
</dbReference>
<dbReference type="GO" id="GO:1904262">
    <property type="term" value="P:negative regulation of TORC1 signaling"/>
    <property type="evidence" value="ECO:0000314"/>
    <property type="project" value="UniProtKB"/>
</dbReference>
<dbReference type="GO" id="GO:0001541">
    <property type="term" value="P:ovarian follicle development"/>
    <property type="evidence" value="ECO:0000315"/>
    <property type="project" value="MGI"/>
</dbReference>
<dbReference type="GO" id="GO:1905528">
    <property type="term" value="P:positive regulation of Golgi lumen acidification"/>
    <property type="evidence" value="ECO:0000315"/>
    <property type="project" value="CACAO"/>
</dbReference>
<dbReference type="GO" id="GO:0051897">
    <property type="term" value="P:positive regulation of phosphatidylinositol 3-kinase/protein kinase B signal transduction"/>
    <property type="evidence" value="ECO:0000315"/>
    <property type="project" value="MGI"/>
</dbReference>
<dbReference type="GO" id="GO:0031398">
    <property type="term" value="P:positive regulation of protein ubiquitination"/>
    <property type="evidence" value="ECO:0007669"/>
    <property type="project" value="Ensembl"/>
</dbReference>
<dbReference type="GO" id="GO:0045944">
    <property type="term" value="P:positive regulation of transcription by RNA polymerase II"/>
    <property type="evidence" value="ECO:0000316"/>
    <property type="project" value="MGI"/>
</dbReference>
<dbReference type="GO" id="GO:0050847">
    <property type="term" value="P:progesterone receptor signaling pathway"/>
    <property type="evidence" value="ECO:0000250"/>
    <property type="project" value="UniProtKB"/>
</dbReference>
<dbReference type="GO" id="GO:0060736">
    <property type="term" value="P:prostate gland growth"/>
    <property type="evidence" value="ECO:0000315"/>
    <property type="project" value="MGI"/>
</dbReference>
<dbReference type="GO" id="GO:0043161">
    <property type="term" value="P:proteasome-mediated ubiquitin-dependent protein catabolic process"/>
    <property type="evidence" value="ECO:0000314"/>
    <property type="project" value="UniProtKB"/>
</dbReference>
<dbReference type="GO" id="GO:0051865">
    <property type="term" value="P:protein autoubiquitination"/>
    <property type="evidence" value="ECO:0007669"/>
    <property type="project" value="Ensembl"/>
</dbReference>
<dbReference type="GO" id="GO:0070936">
    <property type="term" value="P:protein K48-linked ubiquitination"/>
    <property type="evidence" value="ECO:0000250"/>
    <property type="project" value="UniProtKB"/>
</dbReference>
<dbReference type="GO" id="GO:0016567">
    <property type="term" value="P:protein ubiquitination"/>
    <property type="evidence" value="ECO:0000314"/>
    <property type="project" value="MGI"/>
</dbReference>
<dbReference type="GO" id="GO:0042752">
    <property type="term" value="P:regulation of circadian rhythm"/>
    <property type="evidence" value="ECO:0000315"/>
    <property type="project" value="UniProtKB"/>
</dbReference>
<dbReference type="GO" id="GO:0048167">
    <property type="term" value="P:regulation of synaptic plasticity"/>
    <property type="evidence" value="ECO:0000314"/>
    <property type="project" value="UniProtKB"/>
</dbReference>
<dbReference type="GO" id="GO:2000058">
    <property type="term" value="P:regulation of ubiquitin-dependent protein catabolic process"/>
    <property type="evidence" value="ECO:0000250"/>
    <property type="project" value="UniProtKB"/>
</dbReference>
<dbReference type="GO" id="GO:0032570">
    <property type="term" value="P:response to progesterone"/>
    <property type="evidence" value="ECO:0000250"/>
    <property type="project" value="UniProtKB"/>
</dbReference>
<dbReference type="GO" id="GO:0048511">
    <property type="term" value="P:rhythmic process"/>
    <property type="evidence" value="ECO:0007669"/>
    <property type="project" value="UniProtKB-KW"/>
</dbReference>
<dbReference type="GO" id="GO:0035037">
    <property type="term" value="P:sperm entry"/>
    <property type="evidence" value="ECO:0000315"/>
    <property type="project" value="MGI"/>
</dbReference>
<dbReference type="GO" id="GO:0006511">
    <property type="term" value="P:ubiquitin-dependent protein catabolic process"/>
    <property type="evidence" value="ECO:0000314"/>
    <property type="project" value="MGI"/>
</dbReference>
<dbReference type="CDD" id="cd00078">
    <property type="entry name" value="HECTc"/>
    <property type="match status" value="1"/>
</dbReference>
<dbReference type="FunFam" id="3.90.1750.10:FF:000026">
    <property type="entry name" value="E3 ubiquitin-protein ligase HACE1"/>
    <property type="match status" value="1"/>
</dbReference>
<dbReference type="FunFam" id="3.30.2160.10:FF:000004">
    <property type="entry name" value="probable E3 ubiquitin-protein ligase HERC4 isoform X1"/>
    <property type="match status" value="1"/>
</dbReference>
<dbReference type="FunFam" id="3.30.2410.10:FF:000003">
    <property type="entry name" value="probable E3 ubiquitin-protein ligase HERC4 isoform X1"/>
    <property type="match status" value="1"/>
</dbReference>
<dbReference type="FunFam" id="3.90.1750.10:FF:000008">
    <property type="entry name" value="Putative ubiquitin-protein ligase E3A"/>
    <property type="match status" value="1"/>
</dbReference>
<dbReference type="Gene3D" id="3.30.2160.10">
    <property type="entry name" value="Hect, E3 ligase catalytic domain"/>
    <property type="match status" value="1"/>
</dbReference>
<dbReference type="Gene3D" id="3.30.2410.10">
    <property type="entry name" value="Hect, E3 ligase catalytic domain"/>
    <property type="match status" value="1"/>
</dbReference>
<dbReference type="Gene3D" id="3.90.1750.10">
    <property type="entry name" value="Hect, E3 ligase catalytic domains"/>
    <property type="match status" value="1"/>
</dbReference>
<dbReference type="Gene3D" id="6.10.130.10">
    <property type="entry name" value="Ubiquitin-protein ligase E3A, N-terminal zinc-binding domain (AZUL)"/>
    <property type="match status" value="1"/>
</dbReference>
<dbReference type="InterPro" id="IPR032353">
    <property type="entry name" value="AZUL"/>
</dbReference>
<dbReference type="InterPro" id="IPR042556">
    <property type="entry name" value="AZUL_sf"/>
</dbReference>
<dbReference type="InterPro" id="IPR044611">
    <property type="entry name" value="E3A/B/C-like"/>
</dbReference>
<dbReference type="InterPro" id="IPR000569">
    <property type="entry name" value="HECT_dom"/>
</dbReference>
<dbReference type="InterPro" id="IPR035983">
    <property type="entry name" value="Hect_E3_ubiquitin_ligase"/>
</dbReference>
<dbReference type="InterPro" id="IPR017134">
    <property type="entry name" value="UBE3A"/>
</dbReference>
<dbReference type="PANTHER" id="PTHR45700:SF10">
    <property type="entry name" value="UBIQUITIN-PROTEIN LIGASE E3A"/>
    <property type="match status" value="1"/>
</dbReference>
<dbReference type="PANTHER" id="PTHR45700">
    <property type="entry name" value="UBIQUITIN-PROTEIN LIGASE E3C"/>
    <property type="match status" value="1"/>
</dbReference>
<dbReference type="Pfam" id="PF16558">
    <property type="entry name" value="AZUL"/>
    <property type="match status" value="1"/>
</dbReference>
<dbReference type="Pfam" id="PF00632">
    <property type="entry name" value="HECT"/>
    <property type="match status" value="1"/>
</dbReference>
<dbReference type="PIRSF" id="PIRSF037201">
    <property type="entry name" value="Ubiquitin-protein_ligase_E6-AP"/>
    <property type="match status" value="1"/>
</dbReference>
<dbReference type="SMART" id="SM00119">
    <property type="entry name" value="HECTc"/>
    <property type="match status" value="1"/>
</dbReference>
<dbReference type="SUPFAM" id="SSF56204">
    <property type="entry name" value="Hect, E3 ligase catalytic domain"/>
    <property type="match status" value="1"/>
</dbReference>
<dbReference type="PROSITE" id="PS50237">
    <property type="entry name" value="HECT"/>
    <property type="match status" value="1"/>
</dbReference>
<gene>
    <name evidence="11 14" type="primary">Ube3a</name>
</gene>
<feature type="chain" id="PRO_0000194981" description="Ubiquitin-protein ligase E3A">
    <location>
        <begin position="1"/>
        <end position="870"/>
    </location>
</feature>
<feature type="domain" description="HECT" evidence="2">
    <location>
        <begin position="542"/>
        <end position="870"/>
    </location>
</feature>
<feature type="zinc finger region" description="C4-type; atypical" evidence="1">
    <location>
        <begin position="42"/>
        <end position="81"/>
    </location>
</feature>
<feature type="region of interest" description="Disordered" evidence="3">
    <location>
        <begin position="171"/>
        <end position="223"/>
    </location>
</feature>
<feature type="compositionally biased region" description="Basic and acidic residues" evidence="3">
    <location>
        <begin position="171"/>
        <end position="180"/>
    </location>
</feature>
<feature type="compositionally biased region" description="Polar residues" evidence="3">
    <location>
        <begin position="208"/>
        <end position="220"/>
    </location>
</feature>
<feature type="active site" description="Glycyl thioester intermediate" evidence="2 5 13">
    <location>
        <position position="838"/>
    </location>
</feature>
<feature type="modified residue" description="Phosphoserine" evidence="15">
    <location>
        <position position="8"/>
    </location>
</feature>
<feature type="modified residue" description="Phosphoserine" evidence="16">
    <location>
        <position position="213"/>
    </location>
</feature>
<feature type="modified residue" description="Phosphotyrosine; by ABL1" evidence="1">
    <location>
        <position position="654"/>
    </location>
</feature>
<feature type="splice variant" id="VSP_057563" description="In isoform 2 and isoform 3.">
    <location>
        <begin position="1"/>
        <end position="21"/>
    </location>
</feature>
<feature type="splice variant" id="VSP_057564" description="In isoform 3.">
    <location>
        <begin position="784"/>
        <end position="870"/>
    </location>
</feature>
<feature type="mutagenesis site" description="Abolishes catalytic activity. Abolishes ability to ubiquitinate ARC and LAMTOR1." evidence="5 7">
    <original>C</original>
    <variation>A</variation>
    <location>
        <position position="838"/>
    </location>
</feature>
<feature type="sequence conflict" description="In Ref. 1; AAB63361." evidence="12" ref="1">
    <original>R</original>
    <variation>S</variation>
    <location>
        <position position="7"/>
    </location>
</feature>
<feature type="sequence conflict" description="In Ref. 1; AAB63361." evidence="12" ref="1">
    <original>E</original>
    <variation>D</variation>
    <location>
        <position position="171"/>
    </location>
</feature>
<feature type="sequence conflict" description="In Ref. 1; AAB63361." evidence="12" ref="1">
    <original>V</original>
    <variation>L</variation>
    <location>
        <position position="285"/>
    </location>
</feature>
<feature type="sequence conflict" description="In Ref. 1; AAB63361." evidence="12" ref="1">
    <original>S</original>
    <variation>T</variation>
    <location>
        <position position="327"/>
    </location>
</feature>
<feature type="sequence conflict" description="In Ref. 1; AAB63361." evidence="12" ref="1">
    <original>K</original>
    <variation>N</variation>
    <location>
        <position position="368"/>
    </location>
</feature>
<feature type="sequence conflict" description="In Ref. 1; AAB63361." evidence="12" ref="1">
    <original>F</original>
    <variation>S</variation>
    <location>
        <position position="444"/>
    </location>
</feature>
<feature type="sequence conflict" description="In Ref. 1; AAB63361." evidence="12" ref="1">
    <original>F</original>
    <variation>G</variation>
    <location>
        <position position="470"/>
    </location>
</feature>
<feature type="sequence conflict" description="In Ref. 1; AAB63361." evidence="12" ref="1">
    <original>R</original>
    <variation>T</variation>
    <location>
        <position position="519"/>
    </location>
</feature>
<feature type="sequence conflict" description="In Ref. 2; AAB47756." evidence="12" ref="2">
    <original>D</original>
    <variation>N</variation>
    <location>
        <position position="581"/>
    </location>
</feature>
<feature type="sequence conflict" description="In Ref. 1; AAB63361." evidence="12" ref="1">
    <location>
        <position position="613"/>
    </location>
</feature>
<feature type="sequence conflict" description="In Ref. 1; AAB63361." evidence="12" ref="1">
    <original>NL</original>
    <variation>IS</variation>
    <location>
        <begin position="710"/>
        <end position="711"/>
    </location>
</feature>
<feature type="sequence conflict" description="In Ref. 1; AAB63361." evidence="12" ref="1">
    <original>Q</original>
    <variation>L</variation>
    <location>
        <position position="802"/>
    </location>
</feature>
<feature type="sequence conflict" description="In Ref. 1; AAB63361." evidence="12" ref="1">
    <original>KE</original>
    <variation>NV</variation>
    <location>
        <begin position="854"/>
        <end position="855"/>
    </location>
</feature>
<proteinExistence type="evidence at protein level"/>
<reference key="1">
    <citation type="journal article" date="1997" name="J. Biol. Chem.">
        <title>Subcellular localization and ubiquitin-conjugating enzyme (E2) interactions of mammalian HECT family ubiquitin protein ligases.</title>
        <authorList>
            <person name="Hatakeyama S."/>
            <person name="Jensen J.P."/>
            <person name="Weissman A.M."/>
        </authorList>
    </citation>
    <scope>NUCLEOTIDE SEQUENCE [MRNA] (ISOFORM 1)</scope>
    <scope>SUBCELLULAR LOCATION</scope>
    <source>
        <strain>C57BL/6 X CBA</strain>
    </source>
</reference>
<reference key="2">
    <citation type="journal article" date="1997" name="Genome Res.">
        <title>The E6-Ap ubiquitin-protein ligase (UBE3A) gene is localized within a narrowed Angelman syndrome critical region.</title>
        <authorList>
            <person name="Sutcliffe J.S."/>
            <person name="Jiang Y.-H."/>
            <person name="Galjaard R.-J."/>
            <person name="Matsuura T."/>
            <person name="Fang P."/>
            <person name="Kubota T."/>
            <person name="Christian S.L."/>
            <person name="Bressler J."/>
            <person name="Cattanach B."/>
            <person name="Ledbetter D.H."/>
            <person name="Beaudet A.L."/>
        </authorList>
    </citation>
    <scope>NUCLEOTIDE SEQUENCE [MRNA] (ISOFORM 2)</scope>
    <scope>TISSUE SPECIFICITY</scope>
    <source>
        <strain>BALB/cJ</strain>
        <tissue>Brain</tissue>
    </source>
</reference>
<reference key="3">
    <citation type="journal article" date="2005" name="Science">
        <title>The transcriptional landscape of the mammalian genome.</title>
        <authorList>
            <person name="Carninci P."/>
            <person name="Kasukawa T."/>
            <person name="Katayama S."/>
            <person name="Gough J."/>
            <person name="Frith M.C."/>
            <person name="Maeda N."/>
            <person name="Oyama R."/>
            <person name="Ravasi T."/>
            <person name="Lenhard B."/>
            <person name="Wells C."/>
            <person name="Kodzius R."/>
            <person name="Shimokawa K."/>
            <person name="Bajic V.B."/>
            <person name="Brenner S.E."/>
            <person name="Batalov S."/>
            <person name="Forrest A.R."/>
            <person name="Zavolan M."/>
            <person name="Davis M.J."/>
            <person name="Wilming L.G."/>
            <person name="Aidinis V."/>
            <person name="Allen J.E."/>
            <person name="Ambesi-Impiombato A."/>
            <person name="Apweiler R."/>
            <person name="Aturaliya R.N."/>
            <person name="Bailey T.L."/>
            <person name="Bansal M."/>
            <person name="Baxter L."/>
            <person name="Beisel K.W."/>
            <person name="Bersano T."/>
            <person name="Bono H."/>
            <person name="Chalk A.M."/>
            <person name="Chiu K.P."/>
            <person name="Choudhary V."/>
            <person name="Christoffels A."/>
            <person name="Clutterbuck D.R."/>
            <person name="Crowe M.L."/>
            <person name="Dalla E."/>
            <person name="Dalrymple B.P."/>
            <person name="de Bono B."/>
            <person name="Della Gatta G."/>
            <person name="di Bernardo D."/>
            <person name="Down T."/>
            <person name="Engstrom P."/>
            <person name="Fagiolini M."/>
            <person name="Faulkner G."/>
            <person name="Fletcher C.F."/>
            <person name="Fukushima T."/>
            <person name="Furuno M."/>
            <person name="Futaki S."/>
            <person name="Gariboldi M."/>
            <person name="Georgii-Hemming P."/>
            <person name="Gingeras T.R."/>
            <person name="Gojobori T."/>
            <person name="Green R.E."/>
            <person name="Gustincich S."/>
            <person name="Harbers M."/>
            <person name="Hayashi Y."/>
            <person name="Hensch T.K."/>
            <person name="Hirokawa N."/>
            <person name="Hill D."/>
            <person name="Huminiecki L."/>
            <person name="Iacono M."/>
            <person name="Ikeo K."/>
            <person name="Iwama A."/>
            <person name="Ishikawa T."/>
            <person name="Jakt M."/>
            <person name="Kanapin A."/>
            <person name="Katoh M."/>
            <person name="Kawasawa Y."/>
            <person name="Kelso J."/>
            <person name="Kitamura H."/>
            <person name="Kitano H."/>
            <person name="Kollias G."/>
            <person name="Krishnan S.P."/>
            <person name="Kruger A."/>
            <person name="Kummerfeld S.K."/>
            <person name="Kurochkin I.V."/>
            <person name="Lareau L.F."/>
            <person name="Lazarevic D."/>
            <person name="Lipovich L."/>
            <person name="Liu J."/>
            <person name="Liuni S."/>
            <person name="McWilliam S."/>
            <person name="Madan Babu M."/>
            <person name="Madera M."/>
            <person name="Marchionni L."/>
            <person name="Matsuda H."/>
            <person name="Matsuzawa S."/>
            <person name="Miki H."/>
            <person name="Mignone F."/>
            <person name="Miyake S."/>
            <person name="Morris K."/>
            <person name="Mottagui-Tabar S."/>
            <person name="Mulder N."/>
            <person name="Nakano N."/>
            <person name="Nakauchi H."/>
            <person name="Ng P."/>
            <person name="Nilsson R."/>
            <person name="Nishiguchi S."/>
            <person name="Nishikawa S."/>
            <person name="Nori F."/>
            <person name="Ohara O."/>
            <person name="Okazaki Y."/>
            <person name="Orlando V."/>
            <person name="Pang K.C."/>
            <person name="Pavan W.J."/>
            <person name="Pavesi G."/>
            <person name="Pesole G."/>
            <person name="Petrovsky N."/>
            <person name="Piazza S."/>
            <person name="Reed J."/>
            <person name="Reid J.F."/>
            <person name="Ring B.Z."/>
            <person name="Ringwald M."/>
            <person name="Rost B."/>
            <person name="Ruan Y."/>
            <person name="Salzberg S.L."/>
            <person name="Sandelin A."/>
            <person name="Schneider C."/>
            <person name="Schoenbach C."/>
            <person name="Sekiguchi K."/>
            <person name="Semple C.A."/>
            <person name="Seno S."/>
            <person name="Sessa L."/>
            <person name="Sheng Y."/>
            <person name="Shibata Y."/>
            <person name="Shimada H."/>
            <person name="Shimada K."/>
            <person name="Silva D."/>
            <person name="Sinclair B."/>
            <person name="Sperling S."/>
            <person name="Stupka E."/>
            <person name="Sugiura K."/>
            <person name="Sultana R."/>
            <person name="Takenaka Y."/>
            <person name="Taki K."/>
            <person name="Tammoja K."/>
            <person name="Tan S.L."/>
            <person name="Tang S."/>
            <person name="Taylor M.S."/>
            <person name="Tegner J."/>
            <person name="Teichmann S.A."/>
            <person name="Ueda H.R."/>
            <person name="van Nimwegen E."/>
            <person name="Verardo R."/>
            <person name="Wei C.L."/>
            <person name="Yagi K."/>
            <person name="Yamanishi H."/>
            <person name="Zabarovsky E."/>
            <person name="Zhu S."/>
            <person name="Zimmer A."/>
            <person name="Hide W."/>
            <person name="Bult C."/>
            <person name="Grimmond S.M."/>
            <person name="Teasdale R.D."/>
            <person name="Liu E.T."/>
            <person name="Brusic V."/>
            <person name="Quackenbush J."/>
            <person name="Wahlestedt C."/>
            <person name="Mattick J.S."/>
            <person name="Hume D.A."/>
            <person name="Kai C."/>
            <person name="Sasaki D."/>
            <person name="Tomaru Y."/>
            <person name="Fukuda S."/>
            <person name="Kanamori-Katayama M."/>
            <person name="Suzuki M."/>
            <person name="Aoki J."/>
            <person name="Arakawa T."/>
            <person name="Iida J."/>
            <person name="Imamura K."/>
            <person name="Itoh M."/>
            <person name="Kato T."/>
            <person name="Kawaji H."/>
            <person name="Kawagashira N."/>
            <person name="Kawashima T."/>
            <person name="Kojima M."/>
            <person name="Kondo S."/>
            <person name="Konno H."/>
            <person name="Nakano K."/>
            <person name="Ninomiya N."/>
            <person name="Nishio T."/>
            <person name="Okada M."/>
            <person name="Plessy C."/>
            <person name="Shibata K."/>
            <person name="Shiraki T."/>
            <person name="Suzuki S."/>
            <person name="Tagami M."/>
            <person name="Waki K."/>
            <person name="Watahiki A."/>
            <person name="Okamura-Oho Y."/>
            <person name="Suzuki H."/>
            <person name="Kawai J."/>
            <person name="Hayashizaki Y."/>
        </authorList>
    </citation>
    <scope>NUCLEOTIDE SEQUENCE [LARGE SCALE MRNA] (ISOFORM 3)</scope>
    <source>
        <strain>C57BL/6J</strain>
        <tissue>Skin</tissue>
    </source>
</reference>
<reference key="4">
    <citation type="journal article" date="2009" name="PLoS Biol.">
        <title>Lineage-specific biology revealed by a finished genome assembly of the mouse.</title>
        <authorList>
            <person name="Church D.M."/>
            <person name="Goodstadt L."/>
            <person name="Hillier L.W."/>
            <person name="Zody M.C."/>
            <person name="Goldstein S."/>
            <person name="She X."/>
            <person name="Bult C.J."/>
            <person name="Agarwala R."/>
            <person name="Cherry J.L."/>
            <person name="DiCuccio M."/>
            <person name="Hlavina W."/>
            <person name="Kapustin Y."/>
            <person name="Meric P."/>
            <person name="Maglott D."/>
            <person name="Birtle Z."/>
            <person name="Marques A.C."/>
            <person name="Graves T."/>
            <person name="Zhou S."/>
            <person name="Teague B."/>
            <person name="Potamousis K."/>
            <person name="Churas C."/>
            <person name="Place M."/>
            <person name="Herschleb J."/>
            <person name="Runnheim R."/>
            <person name="Forrest D."/>
            <person name="Amos-Landgraf J."/>
            <person name="Schwartz D.C."/>
            <person name="Cheng Z."/>
            <person name="Lindblad-Toh K."/>
            <person name="Eichler E.E."/>
            <person name="Ponting C.P."/>
        </authorList>
    </citation>
    <scope>NUCLEOTIDE SEQUENCE [LARGE SCALE GENOMIC DNA]</scope>
    <source>
        <strain>C57BL/6J</strain>
    </source>
</reference>
<reference key="5">
    <citation type="journal article" date="2004" name="Genome Res.">
        <title>The status, quality, and expansion of the NIH full-length cDNA project: the Mammalian Gene Collection (MGC).</title>
        <authorList>
            <consortium name="The MGC Project Team"/>
        </authorList>
    </citation>
    <scope>NUCLEOTIDE SEQUENCE [LARGE SCALE MRNA] (ISOFORM 3)</scope>
</reference>
<reference key="6">
    <citation type="journal article" date="1998" name="Neuron">
        <title>Mutation of the Angelman ubiquitin ligase in mice causes increased cytoplasmic p53 and deficits of contextual learning and long-term potentiation.</title>
        <authorList>
            <person name="Jiang Y.H."/>
            <person name="Armstrong D."/>
            <person name="Albrecht U."/>
            <person name="Atkins C.M."/>
            <person name="Noebels J.L."/>
            <person name="Eichele G."/>
            <person name="Sweatt J.D."/>
            <person name="Beaudet A.L."/>
        </authorList>
    </citation>
    <scope>DISRUPTION PHENOTYPE</scope>
</reference>
<reference key="7">
    <citation type="journal article" date="2002" name="Neurobiol. Dis.">
        <title>Neurobehavioral and electroencephalographic abnormalities in Ube3a maternal-deficient mice.</title>
        <authorList>
            <person name="Miura K."/>
            <person name="Kishino T."/>
            <person name="Li E."/>
            <person name="Webber H."/>
            <person name="Dikkes P."/>
            <person name="Holmes G.L."/>
            <person name="Wagstaff J."/>
        </authorList>
    </citation>
    <scope>IMPRINTING</scope>
    <scope>DISRUPTION PHENOTYPE</scope>
</reference>
<reference key="8">
    <citation type="journal article" date="2007" name="Proc. Natl. Acad. Sci. U.S.A.">
        <title>Large-scale phosphorylation analysis of mouse liver.</title>
        <authorList>
            <person name="Villen J."/>
            <person name="Beausoleil S.A."/>
            <person name="Gerber S.A."/>
            <person name="Gygi S.P."/>
        </authorList>
    </citation>
    <scope>PHOSPHORYLATION [LARGE SCALE ANALYSIS] AT SER-8</scope>
    <scope>IDENTIFICATION BY MASS SPECTROMETRY [LARGE SCALE ANALYSIS]</scope>
    <source>
        <tissue>Liver</tissue>
    </source>
</reference>
<reference key="9">
    <citation type="journal article" date="2010" name="Cell">
        <title>The Angelman syndrome protein Ube3A regulates synapse development by ubiquitinating Arc.</title>
        <authorList>
            <person name="Greer P.L."/>
            <person name="Hanayama R."/>
            <person name="Bloodgood B.L."/>
            <person name="Mardinly A.R."/>
            <person name="Lipton D.M."/>
            <person name="Flavell S.W."/>
            <person name="Kim T.K."/>
            <person name="Griffith E.C."/>
            <person name="Waldon Z."/>
            <person name="Maehr R."/>
            <person name="Ploegh H.L."/>
            <person name="Chowdhury S."/>
            <person name="Worley P.F."/>
            <person name="Steen J."/>
            <person name="Greenberg M.E."/>
        </authorList>
    </citation>
    <scope>FUNCTION</scope>
    <scope>CATALYTIC ACTIVITY</scope>
    <scope>INTERACTION WITH ARC</scope>
    <scope>INDUCTION</scope>
    <scope>DISRUPTION PHENOTYPE</scope>
    <scope>ACTIVE SITE</scope>
    <scope>MUTAGENESIS OF CYS-838</scope>
</reference>
<reference key="10">
    <citation type="journal article" date="2010" name="Cell">
        <title>A tissue-specific atlas of mouse protein phosphorylation and expression.</title>
        <authorList>
            <person name="Huttlin E.L."/>
            <person name="Jedrychowski M.P."/>
            <person name="Elias J.E."/>
            <person name="Goswami T."/>
            <person name="Rad R."/>
            <person name="Beausoleil S.A."/>
            <person name="Villen J."/>
            <person name="Haas W."/>
            <person name="Sowa M.E."/>
            <person name="Gygi S.P."/>
        </authorList>
    </citation>
    <scope>PHOSPHORYLATION [LARGE SCALE ANALYSIS] AT SER-213</scope>
    <scope>IDENTIFICATION BY MASS SPECTROMETRY [LARGE SCALE ANALYSIS]</scope>
    <source>
        <tissue>Brain</tissue>
        <tissue>Brown adipose tissue</tissue>
        <tissue>Heart</tissue>
        <tissue>Kidney</tissue>
        <tissue>Liver</tissue>
        <tissue>Lung</tissue>
        <tissue>Pancreas</tissue>
        <tissue>Spleen</tissue>
        <tissue>Testis</tissue>
    </source>
</reference>
<reference key="11">
    <citation type="journal article" date="2014" name="Nucleic Acids Res.">
        <title>The E3 ubiquitin ligase UBE3A is an integral component of the molecular circadian clock through regulating the BMAL1 transcription factor.</title>
        <authorList>
            <person name="Gossan N.C."/>
            <person name="Zhang F."/>
            <person name="Guo B."/>
            <person name="Jin D."/>
            <person name="Yoshitane H."/>
            <person name="Yao A."/>
            <person name="Glossop N."/>
            <person name="Zhang Y.Q."/>
            <person name="Fukada Y."/>
            <person name="Meng Q.J."/>
        </authorList>
    </citation>
    <scope>FUNCTION</scope>
    <scope>TISSUE SPECIFICITY</scope>
    <scope>INTERACTION WITH BMAL1</scope>
</reference>
<reference key="12">
    <citation type="journal article" date="2018" name="Elife">
        <title>UBE3A-mediated p18/LAMTOR1 ubiquitination and degradation regulate mTORC1 activity and synaptic plasticity.</title>
        <authorList>
            <person name="Sun J."/>
            <person name="Liu Y."/>
            <person name="Jia Y."/>
            <person name="Hao X."/>
            <person name="Lin W.J."/>
            <person name="Tran J."/>
            <person name="Lynch G."/>
            <person name="Baudry M."/>
            <person name="Bi X."/>
        </authorList>
    </citation>
    <scope>FUNCTION</scope>
    <scope>CATALYTIC ACTIVITY</scope>
    <scope>PATHWAY</scope>
    <scope>ACTIVE SITE</scope>
    <scope>MUTAGENESIS OF CYS-838</scope>
</reference>
<comment type="function">
    <text evidence="1 5 6 7">E3 ubiquitin-protein ligase which accepts ubiquitin from an E2 ubiquitin-conjugating enzyme in the form of a thioester and transfers it to its substrates (PubMed:20211139, PubMed:24728990, PubMed:30020076). Several substrates have been identified including the BMAL1, ARC, LAMTOR1, RAD23A and RAD23B, MCM7 (which is involved in DNA replication), annexin A1, the PML tumor suppressor, and the cell cycle regulator CDKN1B (PubMed:20211139, PubMed:24728990, PubMed:30020076). Additionally, may function as a cellular quality control ubiquitin ligase by helping the degradation of the cytoplasmic misfolded proteins. Finally, UBE3A also promotes its own degradation in vivo (By similarity). Plays an important role in the regulation of the circadian clock: involved in the ubiquitination of the core clock component BMAL1, leading to its proteasomal degradation (PubMed:24728990). Acts as a regulator of synaptic development by mediating ubiquitination and degradation of ARC (PubMed:20211139). Required for synaptic remodeling in neurons by mediating ubiquitination and degradation of LAMTOR1, thereby limiting mTORC1 signaling and activity-dependent synaptic remodeling (PubMed:30020076). Synergizes with WBP2 in enhancing PGR activity (By similarity).</text>
</comment>
<comment type="catalytic activity">
    <reaction evidence="5 7">
        <text>S-ubiquitinyl-[E2 ubiquitin-conjugating enzyme]-L-cysteine + [acceptor protein]-L-lysine = [E2 ubiquitin-conjugating enzyme]-L-cysteine + N(6)-ubiquitinyl-[acceptor protein]-L-lysine.</text>
        <dbReference type="EC" id="2.3.2.26"/>
    </reaction>
</comment>
<comment type="pathway">
    <text evidence="5 7">Protein modification; protein ubiquitination.</text>
</comment>
<comment type="subunit">
    <text evidence="1 5 6">The active form is probably a homotrimer. Binds UBQLN1 and UBQLN2. Interacts with the 26S proteasome. Interacts with BPY2. Interacts with HIF1AN, MAPK6 and NEURL4; interaction with MAPK6 may be mediated by NEURL4. Interacts with the proteasomal subunit PSMD4. Interacts with BMAL1 (PubMed:24728990). Interacts with ARC (PubMed:20211139). Interacts with ESR1 and WBP2 (By similarity).</text>
</comment>
<comment type="subcellular location">
    <subcellularLocation>
        <location evidence="9">Cytoplasm</location>
    </subcellularLocation>
    <subcellularLocation>
        <location evidence="9">Nucleus</location>
    </subcellularLocation>
</comment>
<comment type="alternative products">
    <event type="alternative splicing"/>
    <isoform>
        <id>O08759-1</id>
        <name>1</name>
        <sequence type="displayed"/>
    </isoform>
    <isoform>
        <id>O08759-2</id>
        <name>2</name>
        <sequence type="described" ref="VSP_057563"/>
    </isoform>
    <isoform>
        <id>O08759-3</id>
        <name>3</name>
        <sequence type="described" ref="VSP_057563 VSP_057564"/>
    </isoform>
</comment>
<comment type="tissue specificity">
    <text evidence="6 8">Widely expressed. Most abundant in brain, heart and thymus.</text>
</comment>
<comment type="induction">
    <text evidence="5">Up-regulated in response to neuronal activity.</text>
</comment>
<comment type="PTM">
    <text evidence="1">Phosphorylation at Tyr-654 by ABL1 impairs E3 ligase activity.</text>
</comment>
<comment type="disruption phenotype">
    <text evidence="4 5 10">Mice with maternal deficiency display autism spectrum disorders, characterized by motor dysfunction, inducible seizures and a context-dependent learning deficit (PubMed:11895368, PubMed:9808466). Long-term potentiation (LTP) is severely impaired despite normal baseline synaptic transmission and neuroanatomy (PubMed:9808466). The cytoplasmic abundance of p53/TP53 is increased in postmitotic neurons (PubMed:9808466). Accumulation of ARC protein in neurons, resulting in the excessive internalization of AMPA receptors (AMPARs) at synapses and impaired synaptic function (PubMed:20211139).</text>
</comment>
<comment type="miscellaneous">
    <text evidence="4">The Ube3a locus is imprinted with silencing of the paternal allele in hippocampus and cerebellum in mice.</text>
</comment>
<comment type="miscellaneous">
    <text>A cysteine residue is required for ubiquitin-thioester formation.</text>
</comment>
<comment type="sequence caution" evidence="12">
    <conflict type="frameshift">
        <sequence resource="EMBL-CDS" id="AAB47756"/>
    </conflict>
</comment>
<name>UBE3A_MOUSE</name>
<evidence type="ECO:0000250" key="1">
    <source>
        <dbReference type="UniProtKB" id="Q05086"/>
    </source>
</evidence>
<evidence type="ECO:0000255" key="2">
    <source>
        <dbReference type="PROSITE-ProRule" id="PRU00104"/>
    </source>
</evidence>
<evidence type="ECO:0000256" key="3">
    <source>
        <dbReference type="SAM" id="MobiDB-lite"/>
    </source>
</evidence>
<evidence type="ECO:0000269" key="4">
    <source>
    </source>
</evidence>
<evidence type="ECO:0000269" key="5">
    <source>
    </source>
</evidence>
<evidence type="ECO:0000269" key="6">
    <source>
    </source>
</evidence>
<evidence type="ECO:0000269" key="7">
    <source>
    </source>
</evidence>
<evidence type="ECO:0000269" key="8">
    <source>
    </source>
</evidence>
<evidence type="ECO:0000269" key="9">
    <source>
    </source>
</evidence>
<evidence type="ECO:0000269" key="10">
    <source>
    </source>
</evidence>
<evidence type="ECO:0000303" key="11">
    <source>
    </source>
</evidence>
<evidence type="ECO:0000305" key="12"/>
<evidence type="ECO:0000305" key="13">
    <source>
    </source>
</evidence>
<evidence type="ECO:0000312" key="14">
    <source>
        <dbReference type="MGI" id="MGI:105098"/>
    </source>
</evidence>
<evidence type="ECO:0007744" key="15">
    <source>
    </source>
</evidence>
<evidence type="ECO:0007744" key="16">
    <source>
    </source>
</evidence>
<sequence>MATACKRSPGESQSEDIEASRMKRAAAKHLIERYYHQLTEGCGNEACTNEFCASCPTFLRMDNNAAAIKALELYKINAKLCDPHPSKKGASSAYLENSKGASNNSEIKMNKKEGKDFKDVIYLTEEKVYEIYEFCRESEDYSPLIRVIGRIFSSAEALVLSFRKVKQHTKEELKSLQEKDEDKDEDEKEKAACSAAAMEEDSEASSSRMGDSSQGDNNVQKLGPDDVTVDIDAIRRVYSSLLANEKLETAFLNALVYLSPNVECDLTYHNVYTRDPNYLNLFIIVMENSNLHSPEYLEMALPLFCKAMCKLPLEAQGKLIRLWSKYSADQIRRMMETFQQLITYKVISNEFNSRNLVNDDDAIVAASKCLKMVYYANVVGGDVDTNHNEEDDEEPIPESSELTLQELLGDERRNKKGPRVDPLETELGVKTLDCRKPLISFEEFINEPLNDVLEMDKDYTFFKVETENKFSFMTCPFILNAVTKNLGLYYDNRIRMYSERRITVLYSLVQGQQLNPYLRLKVRRDHIIDDALVRLEMIAMENPADLKKQLYVEFEGEQGVDEGGVSKEFFQLVVEEIFNPDIGMFTYDEATKLFWFNPSSFETEGQFTLIGIVLGLAIYNNCILDVHFPMVVYRKLMGKKGTFRDLGDSHPVLYQSLKDLLEYEGSVEDDMMITFQISQTDLFGNPMMYDLKENGDKIPITNENRKEFVNLYSDYILNKSVEKQFKAFRRGFHMVTNESPLKYLFRPEEIELLICGSRNLDFQALEETTEYDGGYTRESVVIREFWEIVHSFTDEQKRLFLQFTTGTDRAPVGGLGKLKMIIAKNGPDTERLPTSHTCFNVLLLPEYSSKEKLKERLLKAITYAKGFGML</sequence>
<accession>O08759</accession>
<accession>E9QKT1</accession>
<accession>P97482</accession>
<accession>Q8CE29</accession>
<keyword id="KW-0025">Alternative splicing</keyword>
<keyword id="KW-0090">Biological rhythms</keyword>
<keyword id="KW-0963">Cytoplasm</keyword>
<keyword id="KW-0479">Metal-binding</keyword>
<keyword id="KW-0539">Nucleus</keyword>
<keyword id="KW-0597">Phosphoprotein</keyword>
<keyword id="KW-0647">Proteasome</keyword>
<keyword id="KW-1185">Reference proteome</keyword>
<keyword id="KW-0808">Transferase</keyword>
<keyword id="KW-0833">Ubl conjugation pathway</keyword>
<keyword id="KW-0862">Zinc</keyword>
<keyword id="KW-0863">Zinc-finger</keyword>